<feature type="initiator methionine" description="Removed" evidence="1">
    <location>
        <position position="1"/>
    </location>
</feature>
<feature type="chain" id="PRO_0000104593" description="Large ribosomal subunit protein uL30">
    <location>
        <begin position="2"/>
        <end position="59"/>
    </location>
</feature>
<proteinExistence type="inferred from homology"/>
<reference key="1">
    <citation type="submission" date="2003-06" db="EMBL/GenBank/DDBJ databases">
        <title>The complete genome sequence of Haemophilus ducreyi.</title>
        <authorList>
            <person name="Munson R.S. Jr."/>
            <person name="Ray W.C."/>
            <person name="Mahairas G."/>
            <person name="Sabo P."/>
            <person name="Mungur R."/>
            <person name="Johnson L."/>
            <person name="Nguyen D."/>
            <person name="Wang J."/>
            <person name="Forst C."/>
            <person name="Hood L."/>
        </authorList>
    </citation>
    <scope>NUCLEOTIDE SEQUENCE [LARGE SCALE GENOMIC DNA]</scope>
    <source>
        <strain>35000HP / ATCC 700724</strain>
    </source>
</reference>
<dbReference type="EMBL" id="AE017143">
    <property type="protein sequence ID" value="AAP96678.1"/>
    <property type="molecule type" value="Genomic_DNA"/>
</dbReference>
<dbReference type="RefSeq" id="WP_010945704.1">
    <property type="nucleotide sequence ID" value="NC_002940.2"/>
</dbReference>
<dbReference type="SMR" id="Q7VKF1"/>
<dbReference type="STRING" id="233412.HD_1960"/>
<dbReference type="KEGG" id="hdu:HD_1960"/>
<dbReference type="eggNOG" id="COG1841">
    <property type="taxonomic scope" value="Bacteria"/>
</dbReference>
<dbReference type="HOGENOM" id="CLU_131047_1_4_6"/>
<dbReference type="OrthoDB" id="9812790at2"/>
<dbReference type="Proteomes" id="UP000001022">
    <property type="component" value="Chromosome"/>
</dbReference>
<dbReference type="GO" id="GO:0022625">
    <property type="term" value="C:cytosolic large ribosomal subunit"/>
    <property type="evidence" value="ECO:0007669"/>
    <property type="project" value="TreeGrafter"/>
</dbReference>
<dbReference type="GO" id="GO:0003735">
    <property type="term" value="F:structural constituent of ribosome"/>
    <property type="evidence" value="ECO:0007669"/>
    <property type="project" value="InterPro"/>
</dbReference>
<dbReference type="GO" id="GO:0006412">
    <property type="term" value="P:translation"/>
    <property type="evidence" value="ECO:0007669"/>
    <property type="project" value="UniProtKB-UniRule"/>
</dbReference>
<dbReference type="CDD" id="cd01658">
    <property type="entry name" value="Ribosomal_L30"/>
    <property type="match status" value="1"/>
</dbReference>
<dbReference type="FunFam" id="3.30.1390.20:FF:000001">
    <property type="entry name" value="50S ribosomal protein L30"/>
    <property type="match status" value="1"/>
</dbReference>
<dbReference type="Gene3D" id="3.30.1390.20">
    <property type="entry name" value="Ribosomal protein L30, ferredoxin-like fold domain"/>
    <property type="match status" value="1"/>
</dbReference>
<dbReference type="HAMAP" id="MF_01371_B">
    <property type="entry name" value="Ribosomal_uL30_B"/>
    <property type="match status" value="1"/>
</dbReference>
<dbReference type="InterPro" id="IPR036919">
    <property type="entry name" value="Ribo_uL30_ferredoxin-like_sf"/>
</dbReference>
<dbReference type="InterPro" id="IPR005996">
    <property type="entry name" value="Ribosomal_uL30_bac-type"/>
</dbReference>
<dbReference type="InterPro" id="IPR016082">
    <property type="entry name" value="Ribosomal_uL30_ferredoxin-like"/>
</dbReference>
<dbReference type="NCBIfam" id="TIGR01308">
    <property type="entry name" value="rpmD_bact"/>
    <property type="match status" value="1"/>
</dbReference>
<dbReference type="PANTHER" id="PTHR15892:SF2">
    <property type="entry name" value="LARGE RIBOSOMAL SUBUNIT PROTEIN UL30M"/>
    <property type="match status" value="1"/>
</dbReference>
<dbReference type="PANTHER" id="PTHR15892">
    <property type="entry name" value="MITOCHONDRIAL RIBOSOMAL PROTEIN L30"/>
    <property type="match status" value="1"/>
</dbReference>
<dbReference type="Pfam" id="PF00327">
    <property type="entry name" value="Ribosomal_L30"/>
    <property type="match status" value="1"/>
</dbReference>
<dbReference type="PIRSF" id="PIRSF002211">
    <property type="entry name" value="Ribosomal_L30_bac-type"/>
    <property type="match status" value="1"/>
</dbReference>
<dbReference type="SUPFAM" id="SSF55129">
    <property type="entry name" value="Ribosomal protein L30p/L7e"/>
    <property type="match status" value="1"/>
</dbReference>
<organism>
    <name type="scientific">Haemophilus ducreyi (strain 35000HP / ATCC 700724)</name>
    <dbReference type="NCBI Taxonomy" id="233412"/>
    <lineage>
        <taxon>Bacteria</taxon>
        <taxon>Pseudomonadati</taxon>
        <taxon>Pseudomonadota</taxon>
        <taxon>Gammaproteobacteria</taxon>
        <taxon>Pasteurellales</taxon>
        <taxon>Pasteurellaceae</taxon>
        <taxon>Haemophilus</taxon>
    </lineage>
</organism>
<accession>Q7VKF1</accession>
<comment type="subunit">
    <text evidence="2">Part of the 50S ribosomal subunit.</text>
</comment>
<comment type="similarity">
    <text evidence="2">Belongs to the universal ribosomal protein uL30 family.</text>
</comment>
<protein>
    <recommendedName>
        <fullName evidence="2">Large ribosomal subunit protein uL30</fullName>
    </recommendedName>
    <alternativeName>
        <fullName evidence="3">50S ribosomal protein L30</fullName>
    </alternativeName>
</protein>
<keyword id="KW-1185">Reference proteome</keyword>
<keyword id="KW-0687">Ribonucleoprotein</keyword>
<keyword id="KW-0689">Ribosomal protein</keyword>
<name>RL30_HAEDU</name>
<evidence type="ECO:0000250" key="1"/>
<evidence type="ECO:0000255" key="2">
    <source>
        <dbReference type="HAMAP-Rule" id="MF_01371"/>
    </source>
</evidence>
<evidence type="ECO:0000305" key="3"/>
<gene>
    <name evidence="2" type="primary">rpmD</name>
    <name type="ordered locus">HD_1960</name>
</gene>
<sequence length="59" mass="6644">MAKTIKVTQTRSSIARLPKHKATLKGLGLRNIRHTVELIDTPAIRGMINQVSYMVKVEE</sequence>